<reference key="1">
    <citation type="journal article" date="2004" name="Nucleic Acids Res.">
        <title>Unique features revealed by the genome sequence of Acinetobacter sp. ADP1, a versatile and naturally transformation competent bacterium.</title>
        <authorList>
            <person name="Barbe V."/>
            <person name="Vallenet D."/>
            <person name="Fonknechten N."/>
            <person name="Kreimeyer A."/>
            <person name="Oztas S."/>
            <person name="Labarre L."/>
            <person name="Cruveiller S."/>
            <person name="Robert C."/>
            <person name="Duprat S."/>
            <person name="Wincker P."/>
            <person name="Ornston L.N."/>
            <person name="Weissenbach J."/>
            <person name="Marliere P."/>
            <person name="Cohen G.N."/>
            <person name="Medigue C."/>
        </authorList>
    </citation>
    <scope>NUCLEOTIDE SEQUENCE [LARGE SCALE GENOMIC DNA]</scope>
    <source>
        <strain>ATCC 33305 / BD413 / ADP1</strain>
    </source>
</reference>
<accession>Q6FC71</accession>
<gene>
    <name evidence="1" type="primary">cysS</name>
    <name type="ordered locus">ACIAD1481</name>
</gene>
<keyword id="KW-0030">Aminoacyl-tRNA synthetase</keyword>
<keyword id="KW-0067">ATP-binding</keyword>
<keyword id="KW-0963">Cytoplasm</keyword>
<keyword id="KW-0436">Ligase</keyword>
<keyword id="KW-0479">Metal-binding</keyword>
<keyword id="KW-0547">Nucleotide-binding</keyword>
<keyword id="KW-0648">Protein biosynthesis</keyword>
<keyword id="KW-0862">Zinc</keyword>
<organism>
    <name type="scientific">Acinetobacter baylyi (strain ATCC 33305 / BD413 / ADP1)</name>
    <dbReference type="NCBI Taxonomy" id="62977"/>
    <lineage>
        <taxon>Bacteria</taxon>
        <taxon>Pseudomonadati</taxon>
        <taxon>Pseudomonadota</taxon>
        <taxon>Gammaproteobacteria</taxon>
        <taxon>Moraxellales</taxon>
        <taxon>Moraxellaceae</taxon>
        <taxon>Acinetobacter</taxon>
    </lineage>
</organism>
<sequence>MQPFVLYNSEQRKKVEFVPRKPGHIDMYVCGMTVYDYCHIGHARVMVAFDYIIRFLRSQGWDVRYIRNITDIDDKIIKRANENNETIQQLTSRFIDAMNEDAAKLGCAEPDEAPKATEYIGEMQNMISTLVDKGSAYPASNGDVYFEVSKFEKYGRLSGRKLEDMQAGASERVDIEVEKKHPFDFVLWKGAKPNEPSWVSPWGNGRPGWHIECSAMSTCCLGNHFDIHGGGSDLTFPHHENEIAQSEASTGEQYVNYWMHVGFINVDGEKMSKSLGNFFTIRDVMEKFHPEVIRYFIVSSHYRSPVNFSDVALKEAKTALTRFYHAFKAYEQVYGQNDSTQKDEQFIERFNIAMRDDFNTPEAIAVLFELNRELNRAVKEQQAEQAAIYYVTLRHLTQILGLVQHDVDEFLKSDIGQEVLSLSDDEIQAMIQQRADAKKAKDFSGADAIRQALLDQGVVLEDTRQGTLWRRAD</sequence>
<comment type="catalytic activity">
    <reaction evidence="1">
        <text>tRNA(Cys) + L-cysteine + ATP = L-cysteinyl-tRNA(Cys) + AMP + diphosphate</text>
        <dbReference type="Rhea" id="RHEA:17773"/>
        <dbReference type="Rhea" id="RHEA-COMP:9661"/>
        <dbReference type="Rhea" id="RHEA-COMP:9679"/>
        <dbReference type="ChEBI" id="CHEBI:30616"/>
        <dbReference type="ChEBI" id="CHEBI:33019"/>
        <dbReference type="ChEBI" id="CHEBI:35235"/>
        <dbReference type="ChEBI" id="CHEBI:78442"/>
        <dbReference type="ChEBI" id="CHEBI:78517"/>
        <dbReference type="ChEBI" id="CHEBI:456215"/>
        <dbReference type="EC" id="6.1.1.16"/>
    </reaction>
</comment>
<comment type="cofactor">
    <cofactor evidence="1">
        <name>Zn(2+)</name>
        <dbReference type="ChEBI" id="CHEBI:29105"/>
    </cofactor>
    <text evidence="1">Binds 1 zinc ion per subunit.</text>
</comment>
<comment type="subunit">
    <text evidence="1">Monomer.</text>
</comment>
<comment type="subcellular location">
    <subcellularLocation>
        <location evidence="1">Cytoplasm</location>
    </subcellularLocation>
</comment>
<comment type="similarity">
    <text evidence="1">Belongs to the class-I aminoacyl-tRNA synthetase family.</text>
</comment>
<feature type="chain" id="PRO_0000159336" description="Cysteine--tRNA ligase">
    <location>
        <begin position="1"/>
        <end position="473"/>
    </location>
</feature>
<feature type="short sequence motif" description="'HIGH' region">
    <location>
        <begin position="32"/>
        <end position="42"/>
    </location>
</feature>
<feature type="short sequence motif" description="'KMSKS' region">
    <location>
        <begin position="270"/>
        <end position="274"/>
    </location>
</feature>
<feature type="binding site" evidence="1">
    <location>
        <position position="30"/>
    </location>
    <ligand>
        <name>Zn(2+)</name>
        <dbReference type="ChEBI" id="CHEBI:29105"/>
    </ligand>
</feature>
<feature type="binding site" evidence="1">
    <location>
        <position position="213"/>
    </location>
    <ligand>
        <name>Zn(2+)</name>
        <dbReference type="ChEBI" id="CHEBI:29105"/>
    </ligand>
</feature>
<feature type="binding site" evidence="1">
    <location>
        <position position="238"/>
    </location>
    <ligand>
        <name>Zn(2+)</name>
        <dbReference type="ChEBI" id="CHEBI:29105"/>
    </ligand>
</feature>
<feature type="binding site" evidence="1">
    <location>
        <position position="242"/>
    </location>
    <ligand>
        <name>Zn(2+)</name>
        <dbReference type="ChEBI" id="CHEBI:29105"/>
    </ligand>
</feature>
<feature type="binding site" evidence="1">
    <location>
        <position position="273"/>
    </location>
    <ligand>
        <name>ATP</name>
        <dbReference type="ChEBI" id="CHEBI:30616"/>
    </ligand>
</feature>
<name>SYC_ACIAD</name>
<proteinExistence type="inferred from homology"/>
<evidence type="ECO:0000255" key="1">
    <source>
        <dbReference type="HAMAP-Rule" id="MF_00041"/>
    </source>
</evidence>
<protein>
    <recommendedName>
        <fullName evidence="1">Cysteine--tRNA ligase</fullName>
        <ecNumber evidence="1">6.1.1.16</ecNumber>
    </recommendedName>
    <alternativeName>
        <fullName evidence="1">Cysteinyl-tRNA synthetase</fullName>
        <shortName evidence="1">CysRS</shortName>
    </alternativeName>
</protein>
<dbReference type="EC" id="6.1.1.16" evidence="1"/>
<dbReference type="EMBL" id="CR543861">
    <property type="protein sequence ID" value="CAG68340.1"/>
    <property type="molecule type" value="Genomic_DNA"/>
</dbReference>
<dbReference type="RefSeq" id="WP_004925355.1">
    <property type="nucleotide sequence ID" value="NC_005966.1"/>
</dbReference>
<dbReference type="SMR" id="Q6FC71"/>
<dbReference type="STRING" id="202950.GCA_001485005_02084"/>
<dbReference type="GeneID" id="45233889"/>
<dbReference type="KEGG" id="aci:ACIAD1481"/>
<dbReference type="eggNOG" id="COG0215">
    <property type="taxonomic scope" value="Bacteria"/>
</dbReference>
<dbReference type="HOGENOM" id="CLU_013528_0_1_6"/>
<dbReference type="OrthoDB" id="9815130at2"/>
<dbReference type="BioCyc" id="ASP62977:ACIAD_RS06835-MONOMER"/>
<dbReference type="Proteomes" id="UP000000430">
    <property type="component" value="Chromosome"/>
</dbReference>
<dbReference type="GO" id="GO:0005829">
    <property type="term" value="C:cytosol"/>
    <property type="evidence" value="ECO:0007669"/>
    <property type="project" value="TreeGrafter"/>
</dbReference>
<dbReference type="GO" id="GO:0005524">
    <property type="term" value="F:ATP binding"/>
    <property type="evidence" value="ECO:0007669"/>
    <property type="project" value="UniProtKB-UniRule"/>
</dbReference>
<dbReference type="GO" id="GO:0004817">
    <property type="term" value="F:cysteine-tRNA ligase activity"/>
    <property type="evidence" value="ECO:0007669"/>
    <property type="project" value="UniProtKB-UniRule"/>
</dbReference>
<dbReference type="GO" id="GO:0008270">
    <property type="term" value="F:zinc ion binding"/>
    <property type="evidence" value="ECO:0007669"/>
    <property type="project" value="UniProtKB-UniRule"/>
</dbReference>
<dbReference type="GO" id="GO:0006423">
    <property type="term" value="P:cysteinyl-tRNA aminoacylation"/>
    <property type="evidence" value="ECO:0007669"/>
    <property type="project" value="UniProtKB-UniRule"/>
</dbReference>
<dbReference type="CDD" id="cd07963">
    <property type="entry name" value="Anticodon_Ia_Cys"/>
    <property type="match status" value="1"/>
</dbReference>
<dbReference type="CDD" id="cd00672">
    <property type="entry name" value="CysRS_core"/>
    <property type="match status" value="1"/>
</dbReference>
<dbReference type="FunFam" id="3.40.50.620:FF:000009">
    <property type="entry name" value="Cysteine--tRNA ligase"/>
    <property type="match status" value="1"/>
</dbReference>
<dbReference type="Gene3D" id="1.20.120.1910">
    <property type="entry name" value="Cysteine-tRNA ligase, C-terminal anti-codon recognition domain"/>
    <property type="match status" value="1"/>
</dbReference>
<dbReference type="Gene3D" id="3.40.50.620">
    <property type="entry name" value="HUPs"/>
    <property type="match status" value="1"/>
</dbReference>
<dbReference type="HAMAP" id="MF_00041">
    <property type="entry name" value="Cys_tRNA_synth"/>
    <property type="match status" value="1"/>
</dbReference>
<dbReference type="InterPro" id="IPR015803">
    <property type="entry name" value="Cys-tRNA-ligase"/>
</dbReference>
<dbReference type="InterPro" id="IPR015273">
    <property type="entry name" value="Cys-tRNA-synt_Ia_DALR"/>
</dbReference>
<dbReference type="InterPro" id="IPR024909">
    <property type="entry name" value="Cys-tRNA/MSH_ligase"/>
</dbReference>
<dbReference type="InterPro" id="IPR056411">
    <property type="entry name" value="CysS_C"/>
</dbReference>
<dbReference type="InterPro" id="IPR014729">
    <property type="entry name" value="Rossmann-like_a/b/a_fold"/>
</dbReference>
<dbReference type="InterPro" id="IPR032678">
    <property type="entry name" value="tRNA-synt_1_cat_dom"/>
</dbReference>
<dbReference type="InterPro" id="IPR009080">
    <property type="entry name" value="tRNAsynth_Ia_anticodon-bd"/>
</dbReference>
<dbReference type="NCBIfam" id="TIGR00435">
    <property type="entry name" value="cysS"/>
    <property type="match status" value="1"/>
</dbReference>
<dbReference type="PANTHER" id="PTHR10890:SF3">
    <property type="entry name" value="CYSTEINE--TRNA LIGASE, CYTOPLASMIC"/>
    <property type="match status" value="1"/>
</dbReference>
<dbReference type="PANTHER" id="PTHR10890">
    <property type="entry name" value="CYSTEINYL-TRNA SYNTHETASE"/>
    <property type="match status" value="1"/>
</dbReference>
<dbReference type="Pfam" id="PF23493">
    <property type="entry name" value="CysS_C"/>
    <property type="match status" value="1"/>
</dbReference>
<dbReference type="Pfam" id="PF09190">
    <property type="entry name" value="DALR_2"/>
    <property type="match status" value="1"/>
</dbReference>
<dbReference type="Pfam" id="PF01406">
    <property type="entry name" value="tRNA-synt_1e"/>
    <property type="match status" value="1"/>
</dbReference>
<dbReference type="PRINTS" id="PR00983">
    <property type="entry name" value="TRNASYNTHCYS"/>
</dbReference>
<dbReference type="SMART" id="SM00840">
    <property type="entry name" value="DALR_2"/>
    <property type="match status" value="1"/>
</dbReference>
<dbReference type="SUPFAM" id="SSF47323">
    <property type="entry name" value="Anticodon-binding domain of a subclass of class I aminoacyl-tRNA synthetases"/>
    <property type="match status" value="1"/>
</dbReference>
<dbReference type="SUPFAM" id="SSF52374">
    <property type="entry name" value="Nucleotidylyl transferase"/>
    <property type="match status" value="1"/>
</dbReference>